<accession>A5URZ5</accession>
<organism>
    <name type="scientific">Roseiflexus sp. (strain RS-1)</name>
    <dbReference type="NCBI Taxonomy" id="357808"/>
    <lineage>
        <taxon>Bacteria</taxon>
        <taxon>Bacillati</taxon>
        <taxon>Chloroflexota</taxon>
        <taxon>Chloroflexia</taxon>
        <taxon>Chloroflexales</taxon>
        <taxon>Roseiflexineae</taxon>
        <taxon>Roseiflexaceae</taxon>
        <taxon>Roseiflexus</taxon>
    </lineage>
</organism>
<sequence>MRCPYCQHPDSDVIDTRKLHNGETIRRRRKCEACGRRFTTYERVEMVSITVVKKNGEREPYDREKLMRGVRTACYRRPVPAQALEALANDIEAELMARDEPEVPSSLIGDMVMRRLRAIDDVAYIRFASVYRSFADIGKLREAVDELLGQGH</sequence>
<feature type="chain" id="PRO_1000080814" description="Transcriptional repressor NrdR">
    <location>
        <begin position="1"/>
        <end position="152"/>
    </location>
</feature>
<feature type="domain" description="ATP-cone" evidence="1">
    <location>
        <begin position="49"/>
        <end position="139"/>
    </location>
</feature>
<feature type="zinc finger region" evidence="1">
    <location>
        <begin position="3"/>
        <end position="34"/>
    </location>
</feature>
<keyword id="KW-0067">ATP-binding</keyword>
<keyword id="KW-0238">DNA-binding</keyword>
<keyword id="KW-0479">Metal-binding</keyword>
<keyword id="KW-0547">Nucleotide-binding</keyword>
<keyword id="KW-0678">Repressor</keyword>
<keyword id="KW-0804">Transcription</keyword>
<keyword id="KW-0805">Transcription regulation</keyword>
<keyword id="KW-0862">Zinc</keyword>
<keyword id="KW-0863">Zinc-finger</keyword>
<comment type="function">
    <text evidence="1">Negatively regulates transcription of bacterial ribonucleotide reductase nrd genes and operons by binding to NrdR-boxes.</text>
</comment>
<comment type="cofactor">
    <cofactor evidence="1">
        <name>Zn(2+)</name>
        <dbReference type="ChEBI" id="CHEBI:29105"/>
    </cofactor>
    <text evidence="1">Binds 1 zinc ion.</text>
</comment>
<comment type="similarity">
    <text evidence="1">Belongs to the NrdR family.</text>
</comment>
<gene>
    <name evidence="1" type="primary">nrdR</name>
    <name type="ordered locus">RoseRS_0989</name>
</gene>
<reference key="1">
    <citation type="submission" date="2007-04" db="EMBL/GenBank/DDBJ databases">
        <title>Complete sequence of Roseiflexus sp. RS-1.</title>
        <authorList>
            <consortium name="US DOE Joint Genome Institute"/>
            <person name="Copeland A."/>
            <person name="Lucas S."/>
            <person name="Lapidus A."/>
            <person name="Barry K."/>
            <person name="Detter J.C."/>
            <person name="Glavina del Rio T."/>
            <person name="Hammon N."/>
            <person name="Israni S."/>
            <person name="Dalin E."/>
            <person name="Tice H."/>
            <person name="Pitluck S."/>
            <person name="Chertkov O."/>
            <person name="Brettin T."/>
            <person name="Bruce D."/>
            <person name="Han C."/>
            <person name="Schmutz J."/>
            <person name="Larimer F."/>
            <person name="Land M."/>
            <person name="Hauser L."/>
            <person name="Kyrpides N."/>
            <person name="Mikhailova N."/>
            <person name="Bryant D.A."/>
            <person name="Richardson P."/>
        </authorList>
    </citation>
    <scope>NUCLEOTIDE SEQUENCE [LARGE SCALE GENOMIC DNA]</scope>
    <source>
        <strain>RS-1</strain>
    </source>
</reference>
<dbReference type="EMBL" id="CP000686">
    <property type="protein sequence ID" value="ABQ89398.1"/>
    <property type="molecule type" value="Genomic_DNA"/>
</dbReference>
<dbReference type="RefSeq" id="WP_011955751.1">
    <property type="nucleotide sequence ID" value="NC_009523.1"/>
</dbReference>
<dbReference type="SMR" id="A5URZ5"/>
<dbReference type="STRING" id="357808.RoseRS_0989"/>
<dbReference type="KEGG" id="rrs:RoseRS_0989"/>
<dbReference type="eggNOG" id="COG1327">
    <property type="taxonomic scope" value="Bacteria"/>
</dbReference>
<dbReference type="HOGENOM" id="CLU_108412_0_0_0"/>
<dbReference type="OrthoDB" id="9807461at2"/>
<dbReference type="Proteomes" id="UP000006554">
    <property type="component" value="Chromosome"/>
</dbReference>
<dbReference type="GO" id="GO:0005524">
    <property type="term" value="F:ATP binding"/>
    <property type="evidence" value="ECO:0007669"/>
    <property type="project" value="UniProtKB-KW"/>
</dbReference>
<dbReference type="GO" id="GO:0003677">
    <property type="term" value="F:DNA binding"/>
    <property type="evidence" value="ECO:0007669"/>
    <property type="project" value="UniProtKB-KW"/>
</dbReference>
<dbReference type="GO" id="GO:0008270">
    <property type="term" value="F:zinc ion binding"/>
    <property type="evidence" value="ECO:0007669"/>
    <property type="project" value="UniProtKB-UniRule"/>
</dbReference>
<dbReference type="GO" id="GO:0045892">
    <property type="term" value="P:negative regulation of DNA-templated transcription"/>
    <property type="evidence" value="ECO:0007669"/>
    <property type="project" value="UniProtKB-UniRule"/>
</dbReference>
<dbReference type="HAMAP" id="MF_00440">
    <property type="entry name" value="NrdR"/>
    <property type="match status" value="1"/>
</dbReference>
<dbReference type="InterPro" id="IPR005144">
    <property type="entry name" value="ATP-cone_dom"/>
</dbReference>
<dbReference type="InterPro" id="IPR055173">
    <property type="entry name" value="NrdR-like_N"/>
</dbReference>
<dbReference type="InterPro" id="IPR003796">
    <property type="entry name" value="RNR_NrdR-like"/>
</dbReference>
<dbReference type="NCBIfam" id="TIGR00244">
    <property type="entry name" value="transcriptional regulator NrdR"/>
    <property type="match status" value="1"/>
</dbReference>
<dbReference type="PANTHER" id="PTHR30455">
    <property type="entry name" value="TRANSCRIPTIONAL REPRESSOR NRDR"/>
    <property type="match status" value="1"/>
</dbReference>
<dbReference type="PANTHER" id="PTHR30455:SF2">
    <property type="entry name" value="TRANSCRIPTIONAL REPRESSOR NRDR"/>
    <property type="match status" value="1"/>
</dbReference>
<dbReference type="Pfam" id="PF03477">
    <property type="entry name" value="ATP-cone"/>
    <property type="match status" value="1"/>
</dbReference>
<dbReference type="Pfam" id="PF22811">
    <property type="entry name" value="Zn_ribbon_NrdR"/>
    <property type="match status" value="1"/>
</dbReference>
<dbReference type="PROSITE" id="PS51161">
    <property type="entry name" value="ATP_CONE"/>
    <property type="match status" value="1"/>
</dbReference>
<proteinExistence type="inferred from homology"/>
<protein>
    <recommendedName>
        <fullName evidence="1">Transcriptional repressor NrdR</fullName>
    </recommendedName>
</protein>
<evidence type="ECO:0000255" key="1">
    <source>
        <dbReference type="HAMAP-Rule" id="MF_00440"/>
    </source>
</evidence>
<name>NRDR_ROSS1</name>